<accession>A8EXM3</accession>
<proteinExistence type="inferred from homology"/>
<comment type="function">
    <text evidence="1">Responsible for the release of ribosomes from messenger RNA at the termination of protein biosynthesis. May increase the efficiency of translation by recycling ribosomes from one round of translation to another.</text>
</comment>
<comment type="subcellular location">
    <subcellularLocation>
        <location evidence="1">Cytoplasm</location>
    </subcellularLocation>
</comment>
<comment type="similarity">
    <text evidence="1">Belongs to the RRF family.</text>
</comment>
<reference key="1">
    <citation type="submission" date="2007-09" db="EMBL/GenBank/DDBJ databases">
        <title>Complete genome sequence of Rickettsia canadensis.</title>
        <authorList>
            <person name="Madan A."/>
            <person name="Fahey J."/>
            <person name="Helton E."/>
            <person name="Ketteman M."/>
            <person name="Madan A."/>
            <person name="Rodrigues S."/>
            <person name="Sanchez A."/>
            <person name="Whiting M."/>
            <person name="Dasch G."/>
            <person name="Eremeeva M."/>
        </authorList>
    </citation>
    <scope>NUCLEOTIDE SEQUENCE [LARGE SCALE GENOMIC DNA]</scope>
    <source>
        <strain>McKiel</strain>
    </source>
</reference>
<protein>
    <recommendedName>
        <fullName evidence="1">Ribosome-recycling factor</fullName>
        <shortName evidence="1">RRF</shortName>
    </recommendedName>
    <alternativeName>
        <fullName evidence="1">Ribosome-releasing factor</fullName>
    </alternativeName>
</protein>
<organism>
    <name type="scientific">Rickettsia canadensis (strain McKiel)</name>
    <dbReference type="NCBI Taxonomy" id="293613"/>
    <lineage>
        <taxon>Bacteria</taxon>
        <taxon>Pseudomonadati</taxon>
        <taxon>Pseudomonadota</taxon>
        <taxon>Alphaproteobacteria</taxon>
        <taxon>Rickettsiales</taxon>
        <taxon>Rickettsiaceae</taxon>
        <taxon>Rickettsieae</taxon>
        <taxon>Rickettsia</taxon>
        <taxon>belli group</taxon>
    </lineage>
</organism>
<keyword id="KW-0963">Cytoplasm</keyword>
<keyword id="KW-0648">Protein biosynthesis</keyword>
<evidence type="ECO:0000255" key="1">
    <source>
        <dbReference type="HAMAP-Rule" id="MF_00040"/>
    </source>
</evidence>
<gene>
    <name evidence="1" type="primary">frr</name>
    <name type="ordered locus">A1E_00790</name>
</gene>
<dbReference type="EMBL" id="CP000409">
    <property type="protein sequence ID" value="ABV73106.1"/>
    <property type="molecule type" value="Genomic_DNA"/>
</dbReference>
<dbReference type="RefSeq" id="WP_012148307.1">
    <property type="nucleotide sequence ID" value="NC_009879.1"/>
</dbReference>
<dbReference type="SMR" id="A8EXM3"/>
<dbReference type="STRING" id="293613.A1E_00790"/>
<dbReference type="KEGG" id="rcm:A1E_00790"/>
<dbReference type="eggNOG" id="COG0233">
    <property type="taxonomic scope" value="Bacteria"/>
</dbReference>
<dbReference type="HOGENOM" id="CLU_073981_2_1_5"/>
<dbReference type="Proteomes" id="UP000007056">
    <property type="component" value="Chromosome"/>
</dbReference>
<dbReference type="GO" id="GO:0005829">
    <property type="term" value="C:cytosol"/>
    <property type="evidence" value="ECO:0007669"/>
    <property type="project" value="GOC"/>
</dbReference>
<dbReference type="GO" id="GO:0043023">
    <property type="term" value="F:ribosomal large subunit binding"/>
    <property type="evidence" value="ECO:0007669"/>
    <property type="project" value="TreeGrafter"/>
</dbReference>
<dbReference type="GO" id="GO:0002184">
    <property type="term" value="P:cytoplasmic translational termination"/>
    <property type="evidence" value="ECO:0007669"/>
    <property type="project" value="TreeGrafter"/>
</dbReference>
<dbReference type="CDD" id="cd00520">
    <property type="entry name" value="RRF"/>
    <property type="match status" value="1"/>
</dbReference>
<dbReference type="FunFam" id="1.10.132.20:FF:000001">
    <property type="entry name" value="Ribosome-recycling factor"/>
    <property type="match status" value="1"/>
</dbReference>
<dbReference type="FunFam" id="3.30.1360.40:FF:000001">
    <property type="entry name" value="Ribosome-recycling factor"/>
    <property type="match status" value="1"/>
</dbReference>
<dbReference type="Gene3D" id="3.30.1360.40">
    <property type="match status" value="1"/>
</dbReference>
<dbReference type="Gene3D" id="1.10.132.20">
    <property type="entry name" value="Ribosome-recycling factor"/>
    <property type="match status" value="1"/>
</dbReference>
<dbReference type="HAMAP" id="MF_00040">
    <property type="entry name" value="RRF"/>
    <property type="match status" value="1"/>
</dbReference>
<dbReference type="InterPro" id="IPR002661">
    <property type="entry name" value="Ribosome_recyc_fac"/>
</dbReference>
<dbReference type="InterPro" id="IPR023584">
    <property type="entry name" value="Ribosome_recyc_fac_dom"/>
</dbReference>
<dbReference type="InterPro" id="IPR036191">
    <property type="entry name" value="RRF_sf"/>
</dbReference>
<dbReference type="NCBIfam" id="TIGR00496">
    <property type="entry name" value="frr"/>
    <property type="match status" value="1"/>
</dbReference>
<dbReference type="PANTHER" id="PTHR20982:SF3">
    <property type="entry name" value="MITOCHONDRIAL RIBOSOME RECYCLING FACTOR PSEUDO 1"/>
    <property type="match status" value="1"/>
</dbReference>
<dbReference type="PANTHER" id="PTHR20982">
    <property type="entry name" value="RIBOSOME RECYCLING FACTOR"/>
    <property type="match status" value="1"/>
</dbReference>
<dbReference type="Pfam" id="PF01765">
    <property type="entry name" value="RRF"/>
    <property type="match status" value="1"/>
</dbReference>
<dbReference type="SUPFAM" id="SSF55194">
    <property type="entry name" value="Ribosome recycling factor, RRF"/>
    <property type="match status" value="1"/>
</dbReference>
<name>RRF_RICCK</name>
<feature type="chain" id="PRO_1000003249" description="Ribosome-recycling factor">
    <location>
        <begin position="1"/>
        <end position="186"/>
    </location>
</feature>
<sequence>MDTETLKKNLQEKMEKALKVLDHELKGLRTGRASVNLLDSVIVEAYGSKIPLSQVASISTPDARTINVQVWDKSMVSLVEKGITIANLGLTPATDGQLIRLPIPILTEERRKELVKLAHKYGEDTKISLRNIRRDGNEELKKLEKNNILTKDEHHSLSEQVQKLTNDYSNKVDSAIKQKEQEIMTV</sequence>